<organism>
    <name type="scientific">Bordetella avium (strain 197N)</name>
    <dbReference type="NCBI Taxonomy" id="360910"/>
    <lineage>
        <taxon>Bacteria</taxon>
        <taxon>Pseudomonadati</taxon>
        <taxon>Pseudomonadota</taxon>
        <taxon>Betaproteobacteria</taxon>
        <taxon>Burkholderiales</taxon>
        <taxon>Alcaligenaceae</taxon>
        <taxon>Bordetella</taxon>
    </lineage>
</organism>
<protein>
    <recommendedName>
        <fullName evidence="1">1-deoxy-D-xylulose-5-phosphate synthase</fullName>
        <ecNumber evidence="1">2.2.1.7</ecNumber>
    </recommendedName>
    <alternativeName>
        <fullName evidence="1">1-deoxyxylulose-5-phosphate synthase</fullName>
        <shortName evidence="1">DXP synthase</shortName>
        <shortName evidence="1">DXPS</shortName>
    </alternativeName>
</protein>
<keyword id="KW-0414">Isoprene biosynthesis</keyword>
<keyword id="KW-0460">Magnesium</keyword>
<keyword id="KW-0479">Metal-binding</keyword>
<keyword id="KW-1185">Reference proteome</keyword>
<keyword id="KW-0784">Thiamine biosynthesis</keyword>
<keyword id="KW-0786">Thiamine pyrophosphate</keyword>
<keyword id="KW-0808">Transferase</keyword>
<sequence length="620" mass="66373">MTTEHLDRIHSPADLRKLDRRDLKPIADELRAFVLESVSKTGGHLSSNLGTVELTLALHYVFDTPHDRIVWDVGHQTYPHKILTGRRDRMATLRQEGGISGFPKRSESEYDDFGTAHSSTSISAALGMAVASRNAGVARQHIAVIGDGAMSAGMAFEAMNNAGVTSDINLLVILNDNDMSISPPVGALNRYLARLMSGRFYAAAKNMGKAVLQHVPPVLELARRFEEHAKGMITSATMFEEFGFNYVGPIDGHDLDALIPTLQNLKTLQGLQFLHVVTRKGRGYKLAEVDPVLYHGPGKFDPAVGIQAAKTPAKRTFTQVFGAWLCDQAEADPRLVGITPAMREGSGLVEFEQRFPKRYFDVGIAEQHAVTFAAGLACEGQKPVVAIYSTFLQRGYDQVVHDVALQNLDVTFALDRAGLVGADGATHAGNYDIAFLRCVPNMVIATPSDENETRLLLSTCYAYPGPASVRYPRGAGCGAAVSAGLDTVPLGKGVVRRRGARIAIMGFGTLVPAALAAAEKLDATVADMRFVKPLDVELLRELAATHEALVTLEDAAVMGGAGSAVTEALNMAGLTLPVLQLGLPDVFIDHGDQAALLAGVGLDAAGIERSVRERFASLLG</sequence>
<evidence type="ECO:0000255" key="1">
    <source>
        <dbReference type="HAMAP-Rule" id="MF_00315"/>
    </source>
</evidence>
<name>DXS_BORA1</name>
<dbReference type="EC" id="2.2.1.7" evidence="1"/>
<dbReference type="EMBL" id="AM167904">
    <property type="protein sequence ID" value="CAJ49786.1"/>
    <property type="molecule type" value="Genomic_DNA"/>
</dbReference>
<dbReference type="RefSeq" id="WP_012417838.1">
    <property type="nucleotide sequence ID" value="NC_010645.1"/>
</dbReference>
<dbReference type="SMR" id="Q2KZ15"/>
<dbReference type="STRING" id="360910.BAV2177"/>
<dbReference type="KEGG" id="bav:BAV2177"/>
<dbReference type="eggNOG" id="COG1154">
    <property type="taxonomic scope" value="Bacteria"/>
</dbReference>
<dbReference type="HOGENOM" id="CLU_009227_1_4_4"/>
<dbReference type="OrthoDB" id="9803371at2"/>
<dbReference type="UniPathway" id="UPA00064">
    <property type="reaction ID" value="UER00091"/>
</dbReference>
<dbReference type="Proteomes" id="UP000001977">
    <property type="component" value="Chromosome"/>
</dbReference>
<dbReference type="GO" id="GO:0005829">
    <property type="term" value="C:cytosol"/>
    <property type="evidence" value="ECO:0007669"/>
    <property type="project" value="TreeGrafter"/>
</dbReference>
<dbReference type="GO" id="GO:0008661">
    <property type="term" value="F:1-deoxy-D-xylulose-5-phosphate synthase activity"/>
    <property type="evidence" value="ECO:0007669"/>
    <property type="project" value="UniProtKB-UniRule"/>
</dbReference>
<dbReference type="GO" id="GO:0000287">
    <property type="term" value="F:magnesium ion binding"/>
    <property type="evidence" value="ECO:0007669"/>
    <property type="project" value="UniProtKB-UniRule"/>
</dbReference>
<dbReference type="GO" id="GO:0030976">
    <property type="term" value="F:thiamine pyrophosphate binding"/>
    <property type="evidence" value="ECO:0007669"/>
    <property type="project" value="UniProtKB-UniRule"/>
</dbReference>
<dbReference type="GO" id="GO:0052865">
    <property type="term" value="P:1-deoxy-D-xylulose 5-phosphate biosynthetic process"/>
    <property type="evidence" value="ECO:0007669"/>
    <property type="project" value="UniProtKB-UniPathway"/>
</dbReference>
<dbReference type="GO" id="GO:0019288">
    <property type="term" value="P:isopentenyl diphosphate biosynthetic process, methylerythritol 4-phosphate pathway"/>
    <property type="evidence" value="ECO:0007669"/>
    <property type="project" value="TreeGrafter"/>
</dbReference>
<dbReference type="GO" id="GO:0016114">
    <property type="term" value="P:terpenoid biosynthetic process"/>
    <property type="evidence" value="ECO:0007669"/>
    <property type="project" value="UniProtKB-UniRule"/>
</dbReference>
<dbReference type="GO" id="GO:0009228">
    <property type="term" value="P:thiamine biosynthetic process"/>
    <property type="evidence" value="ECO:0007669"/>
    <property type="project" value="UniProtKB-UniRule"/>
</dbReference>
<dbReference type="CDD" id="cd02007">
    <property type="entry name" value="TPP_DXS"/>
    <property type="match status" value="1"/>
</dbReference>
<dbReference type="CDD" id="cd07033">
    <property type="entry name" value="TPP_PYR_DXS_TK_like"/>
    <property type="match status" value="1"/>
</dbReference>
<dbReference type="FunFam" id="3.40.50.920:FF:000002">
    <property type="entry name" value="1-deoxy-D-xylulose-5-phosphate synthase"/>
    <property type="match status" value="1"/>
</dbReference>
<dbReference type="FunFam" id="3.40.50.970:FF:000005">
    <property type="entry name" value="1-deoxy-D-xylulose-5-phosphate synthase"/>
    <property type="match status" value="1"/>
</dbReference>
<dbReference type="Gene3D" id="3.40.50.920">
    <property type="match status" value="1"/>
</dbReference>
<dbReference type="Gene3D" id="3.40.50.970">
    <property type="match status" value="2"/>
</dbReference>
<dbReference type="HAMAP" id="MF_00315">
    <property type="entry name" value="DXP_synth"/>
    <property type="match status" value="1"/>
</dbReference>
<dbReference type="InterPro" id="IPR005477">
    <property type="entry name" value="Dxylulose-5-P_synthase"/>
</dbReference>
<dbReference type="InterPro" id="IPR029061">
    <property type="entry name" value="THDP-binding"/>
</dbReference>
<dbReference type="InterPro" id="IPR009014">
    <property type="entry name" value="Transketo_C/PFOR_II"/>
</dbReference>
<dbReference type="InterPro" id="IPR005475">
    <property type="entry name" value="Transketolase-like_Pyr-bd"/>
</dbReference>
<dbReference type="InterPro" id="IPR020826">
    <property type="entry name" value="Transketolase_BS"/>
</dbReference>
<dbReference type="InterPro" id="IPR033248">
    <property type="entry name" value="Transketolase_C"/>
</dbReference>
<dbReference type="InterPro" id="IPR049557">
    <property type="entry name" value="Transketolase_CS"/>
</dbReference>
<dbReference type="NCBIfam" id="TIGR00204">
    <property type="entry name" value="dxs"/>
    <property type="match status" value="1"/>
</dbReference>
<dbReference type="NCBIfam" id="NF003933">
    <property type="entry name" value="PRK05444.2-2"/>
    <property type="match status" value="1"/>
</dbReference>
<dbReference type="PANTHER" id="PTHR43322">
    <property type="entry name" value="1-D-DEOXYXYLULOSE 5-PHOSPHATE SYNTHASE-RELATED"/>
    <property type="match status" value="1"/>
</dbReference>
<dbReference type="PANTHER" id="PTHR43322:SF5">
    <property type="entry name" value="1-DEOXY-D-XYLULOSE-5-PHOSPHATE SYNTHASE, CHLOROPLASTIC"/>
    <property type="match status" value="1"/>
</dbReference>
<dbReference type="Pfam" id="PF13292">
    <property type="entry name" value="DXP_synthase_N"/>
    <property type="match status" value="1"/>
</dbReference>
<dbReference type="Pfam" id="PF02779">
    <property type="entry name" value="Transket_pyr"/>
    <property type="match status" value="1"/>
</dbReference>
<dbReference type="Pfam" id="PF02780">
    <property type="entry name" value="Transketolase_C"/>
    <property type="match status" value="1"/>
</dbReference>
<dbReference type="SMART" id="SM00861">
    <property type="entry name" value="Transket_pyr"/>
    <property type="match status" value="1"/>
</dbReference>
<dbReference type="SUPFAM" id="SSF52518">
    <property type="entry name" value="Thiamin diphosphate-binding fold (THDP-binding)"/>
    <property type="match status" value="2"/>
</dbReference>
<dbReference type="SUPFAM" id="SSF52922">
    <property type="entry name" value="TK C-terminal domain-like"/>
    <property type="match status" value="1"/>
</dbReference>
<dbReference type="PROSITE" id="PS00801">
    <property type="entry name" value="TRANSKETOLASE_1"/>
    <property type="match status" value="1"/>
</dbReference>
<dbReference type="PROSITE" id="PS00802">
    <property type="entry name" value="TRANSKETOLASE_2"/>
    <property type="match status" value="1"/>
</dbReference>
<proteinExistence type="inferred from homology"/>
<accession>Q2KZ15</accession>
<comment type="function">
    <text evidence="1">Catalyzes the acyloin condensation reaction between C atoms 2 and 3 of pyruvate and glyceraldehyde 3-phosphate to yield 1-deoxy-D-xylulose-5-phosphate (DXP).</text>
</comment>
<comment type="catalytic activity">
    <reaction evidence="1">
        <text>D-glyceraldehyde 3-phosphate + pyruvate + H(+) = 1-deoxy-D-xylulose 5-phosphate + CO2</text>
        <dbReference type="Rhea" id="RHEA:12605"/>
        <dbReference type="ChEBI" id="CHEBI:15361"/>
        <dbReference type="ChEBI" id="CHEBI:15378"/>
        <dbReference type="ChEBI" id="CHEBI:16526"/>
        <dbReference type="ChEBI" id="CHEBI:57792"/>
        <dbReference type="ChEBI" id="CHEBI:59776"/>
        <dbReference type="EC" id="2.2.1.7"/>
    </reaction>
</comment>
<comment type="cofactor">
    <cofactor evidence="1">
        <name>Mg(2+)</name>
        <dbReference type="ChEBI" id="CHEBI:18420"/>
    </cofactor>
    <text evidence="1">Binds 1 Mg(2+) ion per subunit.</text>
</comment>
<comment type="cofactor">
    <cofactor evidence="1">
        <name>thiamine diphosphate</name>
        <dbReference type="ChEBI" id="CHEBI:58937"/>
    </cofactor>
    <text evidence="1">Binds 1 thiamine pyrophosphate per subunit.</text>
</comment>
<comment type="pathway">
    <text evidence="1">Metabolic intermediate biosynthesis; 1-deoxy-D-xylulose 5-phosphate biosynthesis; 1-deoxy-D-xylulose 5-phosphate from D-glyceraldehyde 3-phosphate and pyruvate: step 1/1.</text>
</comment>
<comment type="subunit">
    <text evidence="1">Homodimer.</text>
</comment>
<comment type="similarity">
    <text evidence="1">Belongs to the transketolase family. DXPS subfamily.</text>
</comment>
<feature type="chain" id="PRO_0000256384" description="1-deoxy-D-xylulose-5-phosphate synthase">
    <location>
        <begin position="1"/>
        <end position="620"/>
    </location>
</feature>
<feature type="binding site" evidence="1">
    <location>
        <position position="75"/>
    </location>
    <ligand>
        <name>thiamine diphosphate</name>
        <dbReference type="ChEBI" id="CHEBI:58937"/>
    </ligand>
</feature>
<feature type="binding site" evidence="1">
    <location>
        <begin position="116"/>
        <end position="118"/>
    </location>
    <ligand>
        <name>thiamine diphosphate</name>
        <dbReference type="ChEBI" id="CHEBI:58937"/>
    </ligand>
</feature>
<feature type="binding site" evidence="1">
    <location>
        <position position="147"/>
    </location>
    <ligand>
        <name>Mg(2+)</name>
        <dbReference type="ChEBI" id="CHEBI:18420"/>
    </ligand>
</feature>
<feature type="binding site" evidence="1">
    <location>
        <begin position="148"/>
        <end position="149"/>
    </location>
    <ligand>
        <name>thiamine diphosphate</name>
        <dbReference type="ChEBI" id="CHEBI:58937"/>
    </ligand>
</feature>
<feature type="binding site" evidence="1">
    <location>
        <position position="177"/>
    </location>
    <ligand>
        <name>Mg(2+)</name>
        <dbReference type="ChEBI" id="CHEBI:18420"/>
    </ligand>
</feature>
<feature type="binding site" evidence="1">
    <location>
        <position position="177"/>
    </location>
    <ligand>
        <name>thiamine diphosphate</name>
        <dbReference type="ChEBI" id="CHEBI:58937"/>
    </ligand>
</feature>
<feature type="binding site" evidence="1">
    <location>
        <position position="284"/>
    </location>
    <ligand>
        <name>thiamine diphosphate</name>
        <dbReference type="ChEBI" id="CHEBI:58937"/>
    </ligand>
</feature>
<feature type="binding site" evidence="1">
    <location>
        <position position="366"/>
    </location>
    <ligand>
        <name>thiamine diphosphate</name>
        <dbReference type="ChEBI" id="CHEBI:58937"/>
    </ligand>
</feature>
<reference key="1">
    <citation type="journal article" date="2006" name="J. Bacteriol.">
        <title>Comparison of the genome sequence of the poultry pathogen Bordetella avium with those of B. bronchiseptica, B. pertussis, and B. parapertussis reveals extensive diversity in surface structures associated with host interaction.</title>
        <authorList>
            <person name="Sebaihia M."/>
            <person name="Preston A."/>
            <person name="Maskell D.J."/>
            <person name="Kuzmiak H."/>
            <person name="Connell T.D."/>
            <person name="King N.D."/>
            <person name="Orndorff P.E."/>
            <person name="Miyamoto D.M."/>
            <person name="Thomson N.R."/>
            <person name="Harris D."/>
            <person name="Goble A."/>
            <person name="Lord A."/>
            <person name="Murphy L."/>
            <person name="Quail M.A."/>
            <person name="Rutter S."/>
            <person name="Squares R."/>
            <person name="Squares S."/>
            <person name="Woodward J."/>
            <person name="Parkhill J."/>
            <person name="Temple L.M."/>
        </authorList>
    </citation>
    <scope>NUCLEOTIDE SEQUENCE [LARGE SCALE GENOMIC DNA]</scope>
    <source>
        <strain>197N</strain>
    </source>
</reference>
<gene>
    <name evidence="1" type="primary">dxs</name>
    <name type="ordered locus">BAV2177</name>
</gene>